<comment type="function">
    <text evidence="1">Catalyzes the transfer of a dimethylallyl group onto the adenine at position 37 in tRNAs that read codons beginning with uridine, leading to the formation of N6-(dimethylallyl)adenosine (i(6)A).</text>
</comment>
<comment type="catalytic activity">
    <reaction evidence="1">
        <text>adenosine(37) in tRNA + dimethylallyl diphosphate = N(6)-dimethylallyladenosine(37) in tRNA + diphosphate</text>
        <dbReference type="Rhea" id="RHEA:26482"/>
        <dbReference type="Rhea" id="RHEA-COMP:10162"/>
        <dbReference type="Rhea" id="RHEA-COMP:10375"/>
        <dbReference type="ChEBI" id="CHEBI:33019"/>
        <dbReference type="ChEBI" id="CHEBI:57623"/>
        <dbReference type="ChEBI" id="CHEBI:74411"/>
        <dbReference type="ChEBI" id="CHEBI:74415"/>
        <dbReference type="EC" id="2.5.1.75"/>
    </reaction>
</comment>
<comment type="cofactor">
    <cofactor evidence="1">
        <name>Mg(2+)</name>
        <dbReference type="ChEBI" id="CHEBI:18420"/>
    </cofactor>
</comment>
<comment type="subunit">
    <text evidence="1">Monomer.</text>
</comment>
<comment type="similarity">
    <text evidence="1">Belongs to the IPP transferase family.</text>
</comment>
<proteinExistence type="inferred from homology"/>
<organism>
    <name type="scientific">Buchnera aphidicola subsp. Acyrthosiphon pisum (strain 5A)</name>
    <dbReference type="NCBI Taxonomy" id="563178"/>
    <lineage>
        <taxon>Bacteria</taxon>
        <taxon>Pseudomonadati</taxon>
        <taxon>Pseudomonadota</taxon>
        <taxon>Gammaproteobacteria</taxon>
        <taxon>Enterobacterales</taxon>
        <taxon>Erwiniaceae</taxon>
        <taxon>Buchnera</taxon>
    </lineage>
</organism>
<reference key="1">
    <citation type="journal article" date="2009" name="Science">
        <title>The dynamics and time scale of ongoing genomic erosion in symbiotic bacteria.</title>
        <authorList>
            <person name="Moran N.A."/>
            <person name="McLaughlin H.J."/>
            <person name="Sorek R."/>
        </authorList>
    </citation>
    <scope>NUCLEOTIDE SEQUENCE [LARGE SCALE GENOMIC DNA]</scope>
    <source>
        <strain>5A</strain>
    </source>
</reference>
<dbReference type="EC" id="2.5.1.75" evidence="1"/>
<dbReference type="EMBL" id="CP001161">
    <property type="protein sequence ID" value="ACL30909.1"/>
    <property type="molecule type" value="Genomic_DNA"/>
</dbReference>
<dbReference type="RefSeq" id="WP_009874517.1">
    <property type="nucleotide sequence ID" value="NC_011833.1"/>
</dbReference>
<dbReference type="SMR" id="B8D8D3"/>
<dbReference type="KEGG" id="bap:BUAP5A_562"/>
<dbReference type="HOGENOM" id="CLU_032616_0_0_6"/>
<dbReference type="OrthoDB" id="9776390at2"/>
<dbReference type="Proteomes" id="UP000006904">
    <property type="component" value="Chromosome"/>
</dbReference>
<dbReference type="GO" id="GO:0005524">
    <property type="term" value="F:ATP binding"/>
    <property type="evidence" value="ECO:0007669"/>
    <property type="project" value="UniProtKB-UniRule"/>
</dbReference>
<dbReference type="GO" id="GO:0052381">
    <property type="term" value="F:tRNA dimethylallyltransferase activity"/>
    <property type="evidence" value="ECO:0007669"/>
    <property type="project" value="UniProtKB-UniRule"/>
</dbReference>
<dbReference type="GO" id="GO:0006400">
    <property type="term" value="P:tRNA modification"/>
    <property type="evidence" value="ECO:0007669"/>
    <property type="project" value="TreeGrafter"/>
</dbReference>
<dbReference type="Gene3D" id="1.10.20.140">
    <property type="match status" value="1"/>
</dbReference>
<dbReference type="Gene3D" id="3.40.50.300">
    <property type="entry name" value="P-loop containing nucleotide triphosphate hydrolases"/>
    <property type="match status" value="1"/>
</dbReference>
<dbReference type="HAMAP" id="MF_00185">
    <property type="entry name" value="IPP_trans"/>
    <property type="match status" value="1"/>
</dbReference>
<dbReference type="InterPro" id="IPR039657">
    <property type="entry name" value="Dimethylallyltransferase"/>
</dbReference>
<dbReference type="InterPro" id="IPR018022">
    <property type="entry name" value="IPT"/>
</dbReference>
<dbReference type="InterPro" id="IPR027417">
    <property type="entry name" value="P-loop_NTPase"/>
</dbReference>
<dbReference type="NCBIfam" id="TIGR00174">
    <property type="entry name" value="miaA"/>
    <property type="match status" value="1"/>
</dbReference>
<dbReference type="PANTHER" id="PTHR11088">
    <property type="entry name" value="TRNA DIMETHYLALLYLTRANSFERASE"/>
    <property type="match status" value="1"/>
</dbReference>
<dbReference type="PANTHER" id="PTHR11088:SF60">
    <property type="entry name" value="TRNA DIMETHYLALLYLTRANSFERASE"/>
    <property type="match status" value="1"/>
</dbReference>
<dbReference type="Pfam" id="PF01715">
    <property type="entry name" value="IPPT"/>
    <property type="match status" value="1"/>
</dbReference>
<dbReference type="SUPFAM" id="SSF52540">
    <property type="entry name" value="P-loop containing nucleoside triphosphate hydrolases"/>
    <property type="match status" value="1"/>
</dbReference>
<protein>
    <recommendedName>
        <fullName evidence="1">tRNA dimethylallyltransferase</fullName>
        <ecNumber evidence="1">2.5.1.75</ecNumber>
    </recommendedName>
    <alternativeName>
        <fullName evidence="1">Dimethylallyl diphosphate:tRNA dimethylallyltransferase</fullName>
        <shortName evidence="1">DMAPP:tRNA dimethylallyltransferase</shortName>
        <shortName evidence="1">DMATase</shortName>
    </alternativeName>
    <alternativeName>
        <fullName evidence="1">Isopentenyl-diphosphate:tRNA isopentenyltransferase</fullName>
        <shortName evidence="1">IPP transferase</shortName>
        <shortName evidence="1">IPPT</shortName>
        <shortName evidence="1">IPTase</shortName>
    </alternativeName>
</protein>
<sequence length="302" mass="35499">MGPTACGKSQLAICLRKYLSIELISVDSALIYRGMDIGTDKPSFSDLYNHPHRLLNIKDPVENYSAAEFQKDVLREIDEIIKLGKIPCLVGGSMFYYNVLLHGLSILPPSNIKLREYLIQKSYEKNYLYKKLKLIDPISASRIHKNDFQRLIRALEIFYLSGKSLTELKKKNNYKLPYNIFQFAIIPPNKEWLNNKIELRIKKMLMLGFQKEVEILFLRGDLHKNLPSIRCIGYRQMWEYLEYKNSYKDMFNKTIHATRKLAKHQLTWLKNWKNINKIEYHSTSTILAKKVLDVLEKNDFSV</sequence>
<evidence type="ECO:0000255" key="1">
    <source>
        <dbReference type="HAMAP-Rule" id="MF_00185"/>
    </source>
</evidence>
<feature type="chain" id="PRO_0000377093" description="tRNA dimethylallyltransferase">
    <location>
        <begin position="1"/>
        <end position="302"/>
    </location>
</feature>
<feature type="region of interest" description="Interaction with substrate tRNA" evidence="1">
    <location>
        <begin position="27"/>
        <end position="30"/>
    </location>
</feature>
<feature type="region of interest" description="Interaction with substrate tRNA" evidence="1">
    <location>
        <begin position="149"/>
        <end position="153"/>
    </location>
</feature>
<feature type="binding site" evidence="1">
    <location>
        <begin position="2"/>
        <end position="9"/>
    </location>
    <ligand>
        <name>ATP</name>
        <dbReference type="ChEBI" id="CHEBI:30616"/>
    </ligand>
</feature>
<feature type="binding site" evidence="1">
    <location>
        <begin position="4"/>
        <end position="9"/>
    </location>
    <ligand>
        <name>substrate</name>
    </ligand>
</feature>
<feature type="site" description="Interaction with substrate tRNA" evidence="1">
    <location>
        <position position="93"/>
    </location>
</feature>
<feature type="site" description="Interaction with substrate tRNA" evidence="1">
    <location>
        <position position="115"/>
    </location>
</feature>
<gene>
    <name evidence="1" type="primary">miaA</name>
    <name type="ordered locus">BUAP5A_562</name>
</gene>
<accession>B8D8D3</accession>
<name>MIAA_BUCA5</name>
<keyword id="KW-0067">ATP-binding</keyword>
<keyword id="KW-0460">Magnesium</keyword>
<keyword id="KW-0547">Nucleotide-binding</keyword>
<keyword id="KW-0808">Transferase</keyword>
<keyword id="KW-0819">tRNA processing</keyword>